<comment type="function">
    <text evidence="1">Can catalyze the hydrolysis of ATP in the presence of single-stranded DNA, the ATP-dependent uptake of single-stranded DNA by duplex DNA, and the ATP-dependent hybridization of homologous single-stranded DNAs. It interacts with LexA causing its activation and leading to its autocatalytic cleavage.</text>
</comment>
<comment type="subcellular location">
    <subcellularLocation>
        <location evidence="1">Cytoplasm</location>
    </subcellularLocation>
</comment>
<comment type="similarity">
    <text evidence="1">Belongs to the RecA family.</text>
</comment>
<sequence length="353" mass="37639">MDDKKAGAGLSAEKQKALAAALSQIEKQFGKGSIMRMGDGEVEKDIQVVSTGSLGLDIALGVGGLPRGRVVEIYGPESSGKTTLTLQVVAEMQKLGGTCAFIDAEHALDVNYASKLGVDVGELLISQPDTGEQALEITDALVRSGSIDLIVIDSVAALVPKAEIEGEMGDSLPGLQARLMSQALRKLTGTIKRTNCLVIFINQIRMKIGVMFGSPETTTGGNALKFYASVRLDIRRIGSIKKGDDVIGNETKVKVVKNKVSPPFREAFFDILYGQGISRQGEIIDLGVDAKIVEKSGAWYSYNGDKIGQGKDNAREYLRENPDIAQEIENKVRAALGVAPMNSVPAAEVVTED</sequence>
<organism>
    <name type="scientific">Cupriavidus pinatubonensis (strain JMP 134 / LMG 1197)</name>
    <name type="common">Cupriavidus necator (strain JMP 134)</name>
    <dbReference type="NCBI Taxonomy" id="264198"/>
    <lineage>
        <taxon>Bacteria</taxon>
        <taxon>Pseudomonadati</taxon>
        <taxon>Pseudomonadota</taxon>
        <taxon>Betaproteobacteria</taxon>
        <taxon>Burkholderiales</taxon>
        <taxon>Burkholderiaceae</taxon>
        <taxon>Cupriavidus</taxon>
    </lineage>
</organism>
<name>RECA_CUPPJ</name>
<reference key="1">
    <citation type="journal article" date="2010" name="PLoS ONE">
        <title>The complete multipartite genome sequence of Cupriavidus necator JMP134, a versatile pollutant degrader.</title>
        <authorList>
            <person name="Lykidis A."/>
            <person name="Perez-Pantoja D."/>
            <person name="Ledger T."/>
            <person name="Mavromatis K."/>
            <person name="Anderson I.J."/>
            <person name="Ivanova N.N."/>
            <person name="Hooper S.D."/>
            <person name="Lapidus A."/>
            <person name="Lucas S."/>
            <person name="Gonzalez B."/>
            <person name="Kyrpides N.C."/>
        </authorList>
    </citation>
    <scope>NUCLEOTIDE SEQUENCE [LARGE SCALE GENOMIC DNA]</scope>
    <source>
        <strain>JMP134 / LMG 1197</strain>
    </source>
</reference>
<accession>Q475M4</accession>
<feature type="chain" id="PRO_1000047976" description="Protein RecA">
    <location>
        <begin position="1"/>
        <end position="353"/>
    </location>
</feature>
<feature type="binding site" evidence="1">
    <location>
        <begin position="75"/>
        <end position="82"/>
    </location>
    <ligand>
        <name>ATP</name>
        <dbReference type="ChEBI" id="CHEBI:30616"/>
    </ligand>
</feature>
<keyword id="KW-0067">ATP-binding</keyword>
<keyword id="KW-0963">Cytoplasm</keyword>
<keyword id="KW-0227">DNA damage</keyword>
<keyword id="KW-0233">DNA recombination</keyword>
<keyword id="KW-0234">DNA repair</keyword>
<keyword id="KW-0238">DNA-binding</keyword>
<keyword id="KW-0547">Nucleotide-binding</keyword>
<keyword id="KW-0742">SOS response</keyword>
<dbReference type="EMBL" id="CP000090">
    <property type="protein sequence ID" value="AAZ59909.1"/>
    <property type="molecule type" value="Genomic_DNA"/>
</dbReference>
<dbReference type="SMR" id="Q475M4"/>
<dbReference type="STRING" id="264198.Reut_A0527"/>
<dbReference type="KEGG" id="reu:Reut_A0527"/>
<dbReference type="eggNOG" id="COG0468">
    <property type="taxonomic scope" value="Bacteria"/>
</dbReference>
<dbReference type="HOGENOM" id="CLU_040469_3_2_4"/>
<dbReference type="OrthoDB" id="9776733at2"/>
<dbReference type="GO" id="GO:0005829">
    <property type="term" value="C:cytosol"/>
    <property type="evidence" value="ECO:0007669"/>
    <property type="project" value="TreeGrafter"/>
</dbReference>
<dbReference type="GO" id="GO:0005524">
    <property type="term" value="F:ATP binding"/>
    <property type="evidence" value="ECO:0007669"/>
    <property type="project" value="UniProtKB-UniRule"/>
</dbReference>
<dbReference type="GO" id="GO:0016887">
    <property type="term" value="F:ATP hydrolysis activity"/>
    <property type="evidence" value="ECO:0007669"/>
    <property type="project" value="InterPro"/>
</dbReference>
<dbReference type="GO" id="GO:0140664">
    <property type="term" value="F:ATP-dependent DNA damage sensor activity"/>
    <property type="evidence" value="ECO:0007669"/>
    <property type="project" value="InterPro"/>
</dbReference>
<dbReference type="GO" id="GO:0003684">
    <property type="term" value="F:damaged DNA binding"/>
    <property type="evidence" value="ECO:0007669"/>
    <property type="project" value="UniProtKB-UniRule"/>
</dbReference>
<dbReference type="GO" id="GO:0003697">
    <property type="term" value="F:single-stranded DNA binding"/>
    <property type="evidence" value="ECO:0007669"/>
    <property type="project" value="UniProtKB-UniRule"/>
</dbReference>
<dbReference type="GO" id="GO:0006310">
    <property type="term" value="P:DNA recombination"/>
    <property type="evidence" value="ECO:0007669"/>
    <property type="project" value="UniProtKB-UniRule"/>
</dbReference>
<dbReference type="GO" id="GO:0006281">
    <property type="term" value="P:DNA repair"/>
    <property type="evidence" value="ECO:0007669"/>
    <property type="project" value="UniProtKB-UniRule"/>
</dbReference>
<dbReference type="GO" id="GO:0009432">
    <property type="term" value="P:SOS response"/>
    <property type="evidence" value="ECO:0007669"/>
    <property type="project" value="UniProtKB-UniRule"/>
</dbReference>
<dbReference type="CDD" id="cd00983">
    <property type="entry name" value="RecA"/>
    <property type="match status" value="1"/>
</dbReference>
<dbReference type="FunFam" id="3.40.50.300:FF:000087">
    <property type="entry name" value="Recombinase RecA"/>
    <property type="match status" value="1"/>
</dbReference>
<dbReference type="Gene3D" id="3.40.50.300">
    <property type="entry name" value="P-loop containing nucleotide triphosphate hydrolases"/>
    <property type="match status" value="1"/>
</dbReference>
<dbReference type="HAMAP" id="MF_00268">
    <property type="entry name" value="RecA"/>
    <property type="match status" value="1"/>
</dbReference>
<dbReference type="InterPro" id="IPR003593">
    <property type="entry name" value="AAA+_ATPase"/>
</dbReference>
<dbReference type="InterPro" id="IPR013765">
    <property type="entry name" value="DNA_recomb/repair_RecA"/>
</dbReference>
<dbReference type="InterPro" id="IPR020584">
    <property type="entry name" value="DNA_recomb/repair_RecA_CS"/>
</dbReference>
<dbReference type="InterPro" id="IPR027417">
    <property type="entry name" value="P-loop_NTPase"/>
</dbReference>
<dbReference type="InterPro" id="IPR049261">
    <property type="entry name" value="RecA-like_C"/>
</dbReference>
<dbReference type="InterPro" id="IPR049428">
    <property type="entry name" value="RecA-like_N"/>
</dbReference>
<dbReference type="InterPro" id="IPR020588">
    <property type="entry name" value="RecA_ATP-bd"/>
</dbReference>
<dbReference type="InterPro" id="IPR023400">
    <property type="entry name" value="RecA_C_sf"/>
</dbReference>
<dbReference type="InterPro" id="IPR020587">
    <property type="entry name" value="RecA_monomer-monomer_interface"/>
</dbReference>
<dbReference type="NCBIfam" id="TIGR02012">
    <property type="entry name" value="tigrfam_recA"/>
    <property type="match status" value="1"/>
</dbReference>
<dbReference type="PANTHER" id="PTHR45900:SF1">
    <property type="entry name" value="MITOCHONDRIAL DNA REPAIR PROTEIN RECA HOMOLOG-RELATED"/>
    <property type="match status" value="1"/>
</dbReference>
<dbReference type="PANTHER" id="PTHR45900">
    <property type="entry name" value="RECA"/>
    <property type="match status" value="1"/>
</dbReference>
<dbReference type="Pfam" id="PF00154">
    <property type="entry name" value="RecA"/>
    <property type="match status" value="1"/>
</dbReference>
<dbReference type="Pfam" id="PF21096">
    <property type="entry name" value="RecA_C"/>
    <property type="match status" value="1"/>
</dbReference>
<dbReference type="PRINTS" id="PR00142">
    <property type="entry name" value="RECA"/>
</dbReference>
<dbReference type="SMART" id="SM00382">
    <property type="entry name" value="AAA"/>
    <property type="match status" value="1"/>
</dbReference>
<dbReference type="SUPFAM" id="SSF52540">
    <property type="entry name" value="P-loop containing nucleoside triphosphate hydrolases"/>
    <property type="match status" value="1"/>
</dbReference>
<dbReference type="SUPFAM" id="SSF54752">
    <property type="entry name" value="RecA protein, C-terminal domain"/>
    <property type="match status" value="1"/>
</dbReference>
<dbReference type="PROSITE" id="PS00321">
    <property type="entry name" value="RECA_1"/>
    <property type="match status" value="1"/>
</dbReference>
<dbReference type="PROSITE" id="PS50162">
    <property type="entry name" value="RECA_2"/>
    <property type="match status" value="1"/>
</dbReference>
<dbReference type="PROSITE" id="PS50163">
    <property type="entry name" value="RECA_3"/>
    <property type="match status" value="1"/>
</dbReference>
<gene>
    <name evidence="1" type="primary">recA</name>
    <name type="ordered locus">Reut_A0527</name>
</gene>
<proteinExistence type="inferred from homology"/>
<evidence type="ECO:0000255" key="1">
    <source>
        <dbReference type="HAMAP-Rule" id="MF_00268"/>
    </source>
</evidence>
<protein>
    <recommendedName>
        <fullName evidence="1">Protein RecA</fullName>
    </recommendedName>
    <alternativeName>
        <fullName evidence="1">Recombinase A</fullName>
    </alternativeName>
</protein>